<keyword id="KW-0002">3D-structure</keyword>
<keyword id="KW-0028">Amino-acid biosynthesis</keyword>
<keyword id="KW-0112">Calmodulin-binding</keyword>
<keyword id="KW-0198">Cysteine biosynthesis</keyword>
<keyword id="KW-0963">Cytoplasm</keyword>
<keyword id="KW-0903">Direct protein sequencing</keyword>
<keyword id="KW-0443">Lipid metabolism</keyword>
<keyword id="KW-0456">Lyase</keyword>
<keyword id="KW-0597">Phosphoprotein</keyword>
<keyword id="KW-0663">Pyridoxal phosphate</keyword>
<keyword id="KW-1185">Reference proteome</keyword>
<protein>
    <recommendedName>
        <fullName>Cystathionine gamma-lyase</fullName>
        <shortName>CGL</shortName>
        <shortName>CSE</shortName>
        <ecNumber evidence="6 7">4.4.1.1</ecNumber>
    </recommendedName>
    <alternativeName>
        <fullName>Cysteine desulfhydrase</fullName>
    </alternativeName>
    <alternativeName>
        <fullName>Cysteine-protein sulfhydrase</fullName>
    </alternativeName>
    <alternativeName>
        <fullName>Gamma-cystathionase</fullName>
    </alternativeName>
    <alternativeName>
        <fullName>Homocysteine desulfhydrase</fullName>
        <ecNumber evidence="2">4.4.1.2</ecNumber>
    </alternativeName>
    <alternativeName>
        <fullName>Probasin-related antigen</fullName>
        <shortName>PRB-RA</shortName>
    </alternativeName>
</protein>
<comment type="function">
    <text evidence="2 3 4 7">Catalyzes the last step in the trans-sulfuration pathway from L-methionine to L-cysteine in a pyridoxal-5'-phosphate (PLP)-dependent manner, which consists on cleaving the L,L-cystathionine molecule into L-cysteine, ammonia and 2-oxobutanoate (Probable) (PubMed:13525371). Part of the L-cysteine derived from the trans-sulfuration pathway is utilized for biosynthesis of the ubiquitous antioxidant glutathione. Besides its role in the conversion of L-cystathionine into L-cysteine, it utilizes L-cysteine and L-homocysteine as substrates (at much lower rates than L,L-cystathionine) to produce hydrogen sulfide (H2S). In vitro, it converts two L-cysteine molecules into lanthionine and H2S, and two L-homocysteine molecules to homolanthionine and H2S, which can be particularly relevant under conditions of severe hyperhomocysteinemia. Lanthionine and homolanthionine are structural homologs of L,L-cystathionine that differ by the absence or presence of an extra methylene group, respectively. Acts as a cysteine-protein sulfhydrase by mediating sulfhydration of target proteins: sulfhydration consists of converting -SH groups into -SSH on specific cysteine residues of target proteins such as GAPDH, PTPN1 and NF-kappa-B subunit RELA, thereby regulating their function. By generating the gasotransmitter H2S, it participates in a number of physiological processes such as vasodilation, bone protection, and inflammation (By similarity). Plays an essential role in myogenesis by contributing to the biogenesis of H2S in skeletal muscle tissue (By similarity). Can also accept homoserine as substrate (PubMed:13525371). Catalyzes the elimination of selenocystathionine (which can be derived from the diet) to yield selenocysteine, ammonia and 2-oxobutanoate (Probable).</text>
</comment>
<comment type="catalytic activity">
    <reaction evidence="4 7">
        <text>L,L-cystathionine + H2O = 2-oxobutanoate + L-cysteine + NH4(+)</text>
        <dbReference type="Rhea" id="RHEA:14005"/>
        <dbReference type="ChEBI" id="CHEBI:15377"/>
        <dbReference type="ChEBI" id="CHEBI:16763"/>
        <dbReference type="ChEBI" id="CHEBI:28938"/>
        <dbReference type="ChEBI" id="CHEBI:35235"/>
        <dbReference type="ChEBI" id="CHEBI:58161"/>
        <dbReference type="EC" id="4.4.1.1"/>
    </reaction>
    <physiologicalReaction direction="left-to-right" evidence="4 7">
        <dbReference type="Rhea" id="RHEA:14006"/>
    </physiologicalReaction>
</comment>
<comment type="catalytic activity">
    <reaction evidence="4">
        <text>L-homoserine = 2-oxobutanoate + NH4(+)</text>
        <dbReference type="Rhea" id="RHEA:24923"/>
        <dbReference type="ChEBI" id="CHEBI:16763"/>
        <dbReference type="ChEBI" id="CHEBI:28938"/>
        <dbReference type="ChEBI" id="CHEBI:57476"/>
        <dbReference type="EC" id="4.4.1.1"/>
    </reaction>
    <physiologicalReaction direction="left-to-right" evidence="4">
        <dbReference type="Rhea" id="RHEA:24924"/>
    </physiologicalReaction>
</comment>
<comment type="catalytic activity">
    <reaction evidence="7">
        <text>L-selenocystathionine + H2O = L-selenocysteine + 2-oxobutanoate + NH4(+)</text>
        <dbReference type="Rhea" id="RHEA:31151"/>
        <dbReference type="ChEBI" id="CHEBI:15377"/>
        <dbReference type="ChEBI" id="CHEBI:16763"/>
        <dbReference type="ChEBI" id="CHEBI:28938"/>
        <dbReference type="ChEBI" id="CHEBI:57843"/>
        <dbReference type="ChEBI" id="CHEBI:62226"/>
    </reaction>
    <physiologicalReaction direction="left-to-right" evidence="7">
        <dbReference type="Rhea" id="RHEA:31152"/>
    </physiologicalReaction>
</comment>
<comment type="catalytic activity">
    <reaction evidence="2">
        <text>L-cysteine + H2O = hydrogen sulfide + pyruvate + NH4(+) + H(+)</text>
        <dbReference type="Rhea" id="RHEA:24931"/>
        <dbReference type="ChEBI" id="CHEBI:15361"/>
        <dbReference type="ChEBI" id="CHEBI:15377"/>
        <dbReference type="ChEBI" id="CHEBI:15378"/>
        <dbReference type="ChEBI" id="CHEBI:28938"/>
        <dbReference type="ChEBI" id="CHEBI:29919"/>
        <dbReference type="ChEBI" id="CHEBI:35235"/>
        <dbReference type="EC" id="4.4.1.1"/>
    </reaction>
    <physiologicalReaction direction="left-to-right" evidence="2">
        <dbReference type="Rhea" id="RHEA:24932"/>
    </physiologicalReaction>
</comment>
<comment type="catalytic activity">
    <reaction evidence="2">
        <text>L-homocysteine + H2O = 2-oxobutanoate + hydrogen sulfide + NH4(+) + H(+)</text>
        <dbReference type="Rhea" id="RHEA:14501"/>
        <dbReference type="ChEBI" id="CHEBI:15377"/>
        <dbReference type="ChEBI" id="CHEBI:15378"/>
        <dbReference type="ChEBI" id="CHEBI:16763"/>
        <dbReference type="ChEBI" id="CHEBI:28938"/>
        <dbReference type="ChEBI" id="CHEBI:29919"/>
        <dbReference type="ChEBI" id="CHEBI:58199"/>
        <dbReference type="EC" id="4.4.1.2"/>
    </reaction>
    <physiologicalReaction direction="left-to-right" evidence="2">
        <dbReference type="Rhea" id="RHEA:14502"/>
    </physiologicalReaction>
</comment>
<comment type="cofactor">
    <cofactor evidence="2">
        <name>pyridoxal 5'-phosphate</name>
        <dbReference type="ChEBI" id="CHEBI:597326"/>
    </cofactor>
</comment>
<comment type="biophysicochemical properties">
    <phDependence>
        <text evidence="6">Optimum pH is 8.0 with L-cystathionine.</text>
    </phDependence>
</comment>
<comment type="pathway">
    <text evidence="6">Amino-acid biosynthesis; L-cysteine biosynthesis; L-cysteine from L-homocysteine and L-serine: step 2/2.</text>
</comment>
<comment type="subunit">
    <text evidence="2 3">Homotetramer (By similarity). Interacts with CALM in a calcium-dependent manner (By similarity).</text>
</comment>
<comment type="subcellular location">
    <subcellularLocation>
        <location>Cytoplasm</location>
    </subcellularLocation>
</comment>
<comment type="similarity">
    <text evidence="5">Belongs to the trans-sulfuration enzymes family.</text>
</comment>
<sequence>MQKDASSSGFLPSFQHFATQAIHVGPEPEQWSSRAVVLPISLATTFKQDSPGQSSGFVYSRSGNPTRNCLEKAVAALDGAKHCLTFARGLAATTTITHLLKAGDEVICMDEVYGGTNRYFRRVASEFGLKISFVDCSKTKLLEAAITPQTKLVWIETPTNPTLKLADIKACAQIVHKHKDIILVVDNTFMSAYFQRPLALGADICMCSATKYMNGHSDVVMGLVSVTSDDLNERLRFLQNSLGAVPSPFDCYLCCRGLKTLQIRMEKHFRNGMAVARFLESNPRVEKVIYPGLPSHPQHELAKRQCTGCPGMVSFYIKGTLQHAQVFLKNIKLFALAESLGGYESLAELPAIMTHASVPEKDRATLGISDTLIRLSVGLEDEKDLLEDLGQALKAAHP</sequence>
<organism>
    <name type="scientific">Rattus norvegicus</name>
    <name type="common">Rat</name>
    <dbReference type="NCBI Taxonomy" id="10116"/>
    <lineage>
        <taxon>Eukaryota</taxon>
        <taxon>Metazoa</taxon>
        <taxon>Chordata</taxon>
        <taxon>Craniata</taxon>
        <taxon>Vertebrata</taxon>
        <taxon>Euteleostomi</taxon>
        <taxon>Mammalia</taxon>
        <taxon>Eutheria</taxon>
        <taxon>Euarchontoglires</taxon>
        <taxon>Glires</taxon>
        <taxon>Rodentia</taxon>
        <taxon>Myomorpha</taxon>
        <taxon>Muroidea</taxon>
        <taxon>Muridae</taxon>
        <taxon>Murinae</taxon>
        <taxon>Rattus</taxon>
    </lineage>
</organism>
<reference key="1">
    <citation type="journal article" date="1994" name="J. Biol. Chem.">
        <title>Identification of probasin-related antigen as cystathionine gamma-lyase by molecular cloning.</title>
        <authorList>
            <person name="Nishi N."/>
            <person name="Tanabe H."/>
            <person name="Oya H."/>
            <person name="Urushihara M."/>
            <person name="Miyanaka H."/>
            <person name="Wada F."/>
        </authorList>
    </citation>
    <scope>NUCLEOTIDE SEQUENCE [MRNA]</scope>
    <scope>PARTIAL PROTEIN SEQUENCE</scope>
    <source>
        <strain>Sprague-Dawley</strain>
        <tissue>Liver</tissue>
    </source>
</reference>
<reference key="2">
    <citation type="journal article" date="1990" name="Biochem. J.">
        <title>Sequence of cDNA for rat cystathionine gamma-lyase and comparison of deduced amino acid sequence with related Escherichia coli enzymes.</title>
        <authorList>
            <person name="Erickson P.F."/>
            <person name="Maxwell I.H."/>
            <person name="Su L.J."/>
            <person name="Baumann M."/>
            <person name="Glode L.M."/>
        </authorList>
    </citation>
    <scope>NUCLEOTIDE SEQUENCE [MRNA] OF 35-398</scope>
    <scope>PARTIAL PROTEIN SEQUENCE</scope>
    <source>
        <strain>Sprague-Dawley</strain>
        <tissue>Liver</tissue>
    </source>
</reference>
<reference key="3">
    <citation type="journal article" date="1958" name="J. Biol. Chem.">
        <title>A crystalline enzyme that cleaves homoserine and cystathionine. I. Isolation procedure and some physicochemical properties.</title>
        <authorList>
            <person name="Matsuo Y."/>
            <person name="Greenberg D.M."/>
        </authorList>
    </citation>
    <scope>FUNCTION</scope>
    <scope>CATALYTIC ACTIVITY</scope>
    <scope>BIOPHYSICOCHEMICAL PROPERTIES</scope>
</reference>
<reference key="4">
    <citation type="journal article" date="1981" name="Biochemistry">
        <title>Enzymatic synthesis of selenocysteine in rat liver.</title>
        <authorList>
            <person name="Esaki N."/>
            <person name="Nakamura T."/>
            <person name="Tanaka H."/>
            <person name="Suzuki T."/>
            <person name="Morino Y."/>
            <person name="Soda K."/>
        </authorList>
    </citation>
    <scope>FUNCTION</scope>
    <scope>CATALYTIC ACTIVITY</scope>
</reference>
<reference key="5">
    <citation type="journal article" date="2012" name="Nat. Commun.">
        <title>Quantitative maps of protein phosphorylation sites across 14 different rat organs and tissues.</title>
        <authorList>
            <person name="Lundby A."/>
            <person name="Secher A."/>
            <person name="Lage K."/>
            <person name="Nordsborg N.B."/>
            <person name="Dmytriyev A."/>
            <person name="Lundby C."/>
            <person name="Olsen J.V."/>
        </authorList>
    </citation>
    <scope>PHOSPHORYLATION [LARGE SCALE ANALYSIS] AT SER-50</scope>
    <scope>IDENTIFICATION BY MASS SPECTROMETRY [LARGE SCALE ANALYSIS]</scope>
</reference>
<feature type="chain" id="PRO_0000114752" description="Cystathionine gamma-lyase">
    <location>
        <begin position="1"/>
        <end position="398"/>
    </location>
</feature>
<feature type="binding site" evidence="1">
    <location>
        <position position="61"/>
    </location>
    <ligand>
        <name>substrate</name>
    </ligand>
</feature>
<feature type="binding site" evidence="1">
    <location>
        <position position="113"/>
    </location>
    <ligand>
        <name>substrate</name>
    </ligand>
</feature>
<feature type="binding site" evidence="1">
    <location>
        <position position="118"/>
    </location>
    <ligand>
        <name>substrate</name>
    </ligand>
</feature>
<feature type="binding site" evidence="1">
    <location>
        <position position="338"/>
    </location>
    <ligand>
        <name>substrate</name>
    </ligand>
</feature>
<feature type="modified residue" description="Phosphoserine" evidence="8">
    <location>
        <position position="50"/>
    </location>
</feature>
<feature type="modified residue" description="N6-(pyridoxal phosphate)lysine" evidence="2">
    <location>
        <position position="211"/>
    </location>
</feature>
<feature type="sequence conflict" description="In Ref. 2; AA sequence." evidence="5" ref="2">
    <original>AVVLPIS</original>
    <variation>CCGAAH</variation>
    <location>
        <begin position="35"/>
        <end position="41"/>
    </location>
</feature>
<feature type="sequence conflict" description="In Ref. 2; CAA37547." evidence="5" ref="2">
    <original>T</original>
    <variation>N</variation>
    <location>
        <position position="227"/>
    </location>
</feature>
<feature type="sequence conflict" description="In Ref. 2; CAA37547." evidence="5" ref="2">
    <original>TLQIRMEKHFRN</original>
    <variation>HCRSGWRNTFQD</variation>
    <location>
        <begin position="260"/>
        <end position="271"/>
    </location>
</feature>
<feature type="sequence conflict" description="In Ref. 2; CAA37547." evidence="5" ref="2">
    <original>QCTG</original>
    <variation>SARA</variation>
    <location>
        <begin position="305"/>
        <end position="308"/>
    </location>
</feature>
<gene>
    <name type="primary">Cth</name>
</gene>
<proteinExistence type="evidence at protein level"/>
<accession>P18757</accession>
<name>CGL_RAT</name>
<dbReference type="EC" id="4.4.1.1" evidence="6 7"/>
<dbReference type="EC" id="4.4.1.2" evidence="2"/>
<dbReference type="EMBL" id="D17370">
    <property type="protein sequence ID" value="BAA04189.1"/>
    <property type="molecule type" value="mRNA"/>
</dbReference>
<dbReference type="EMBL" id="X53460">
    <property type="protein sequence ID" value="CAA37547.1"/>
    <property type="molecule type" value="mRNA"/>
</dbReference>
<dbReference type="PIR" id="A49864">
    <property type="entry name" value="A49864"/>
</dbReference>
<dbReference type="RefSeq" id="NP_058770.1">
    <property type="nucleotide sequence ID" value="NM_017074.1"/>
</dbReference>
<dbReference type="PDB" id="8J6N">
    <property type="method" value="X-ray"/>
    <property type="resolution" value="1.90 A"/>
    <property type="chains" value="A/B/C/D/E/F/G/H/I/J/K/L=9-398"/>
</dbReference>
<dbReference type="PDBsum" id="8J6N"/>
<dbReference type="SMR" id="P18757"/>
<dbReference type="FunCoup" id="P18757">
    <property type="interactions" value="933"/>
</dbReference>
<dbReference type="STRING" id="10116.ENSRNOP00000058914"/>
<dbReference type="iPTMnet" id="P18757"/>
<dbReference type="PhosphoSitePlus" id="P18757"/>
<dbReference type="PaxDb" id="10116-ENSRNOP00000058914"/>
<dbReference type="GeneID" id="24962"/>
<dbReference type="KEGG" id="rno:24962"/>
<dbReference type="AGR" id="RGD:2443"/>
<dbReference type="CTD" id="1491"/>
<dbReference type="RGD" id="2443">
    <property type="gene designation" value="Cth"/>
</dbReference>
<dbReference type="eggNOG" id="KOG0053">
    <property type="taxonomic scope" value="Eukaryota"/>
</dbReference>
<dbReference type="InParanoid" id="P18757"/>
<dbReference type="PhylomeDB" id="P18757"/>
<dbReference type="BioCyc" id="MetaCyc:MONOMER-8584"/>
<dbReference type="Reactome" id="R-RNO-1614558">
    <property type="pathway name" value="Degradation of cysteine and homocysteine"/>
</dbReference>
<dbReference type="Reactome" id="R-RNO-1614603">
    <property type="pathway name" value="Cysteine formation from homocysteine"/>
</dbReference>
<dbReference type="UniPathway" id="UPA00136">
    <property type="reaction ID" value="UER00202"/>
</dbReference>
<dbReference type="PRO" id="PR:P18757"/>
<dbReference type="Proteomes" id="UP000002494">
    <property type="component" value="Unplaced"/>
</dbReference>
<dbReference type="GO" id="GO:0005737">
    <property type="term" value="C:cytoplasm"/>
    <property type="evidence" value="ECO:0000318"/>
    <property type="project" value="GO_Central"/>
</dbReference>
<dbReference type="GO" id="GO:0005829">
    <property type="term" value="C:cytosol"/>
    <property type="evidence" value="ECO:0000304"/>
    <property type="project" value="Reactome"/>
</dbReference>
<dbReference type="GO" id="GO:0005516">
    <property type="term" value="F:calmodulin binding"/>
    <property type="evidence" value="ECO:0007669"/>
    <property type="project" value="UniProtKB-KW"/>
</dbReference>
<dbReference type="GO" id="GO:0004123">
    <property type="term" value="F:cystathionine gamma-lyase activity"/>
    <property type="evidence" value="ECO:0000250"/>
    <property type="project" value="UniProtKB"/>
</dbReference>
<dbReference type="GO" id="GO:0047982">
    <property type="term" value="F:homocysteine desulfhydrase activity"/>
    <property type="evidence" value="ECO:0007669"/>
    <property type="project" value="RHEA"/>
</dbReference>
<dbReference type="GO" id="GO:0042802">
    <property type="term" value="F:identical protein binding"/>
    <property type="evidence" value="ECO:0000266"/>
    <property type="project" value="RGD"/>
</dbReference>
<dbReference type="GO" id="GO:0080146">
    <property type="term" value="F:L-cysteine desulfhydrase activity"/>
    <property type="evidence" value="ECO:0007669"/>
    <property type="project" value="RHEA"/>
</dbReference>
<dbReference type="GO" id="GO:0044540">
    <property type="term" value="F:L-cystine L-cysteine-lyase (deaminating)"/>
    <property type="evidence" value="ECO:0000250"/>
    <property type="project" value="UniProtKB"/>
</dbReference>
<dbReference type="GO" id="GO:0030170">
    <property type="term" value="F:pyridoxal phosphate binding"/>
    <property type="evidence" value="ECO:0000250"/>
    <property type="project" value="UniProtKB"/>
</dbReference>
<dbReference type="GO" id="GO:0098606">
    <property type="term" value="F:selenocystathionine gamma-lyase activity"/>
    <property type="evidence" value="ECO:0007669"/>
    <property type="project" value="RHEA"/>
</dbReference>
<dbReference type="GO" id="GO:1990830">
    <property type="term" value="P:cellular response to leukemia inhibitory factor"/>
    <property type="evidence" value="ECO:0000266"/>
    <property type="project" value="RGD"/>
</dbReference>
<dbReference type="GO" id="GO:0019344">
    <property type="term" value="P:cysteine biosynthetic process"/>
    <property type="evidence" value="ECO:0000250"/>
    <property type="project" value="UniProtKB"/>
</dbReference>
<dbReference type="GO" id="GO:0019343">
    <property type="term" value="P:cysteine biosynthetic process via cystathionine"/>
    <property type="evidence" value="ECO:0000266"/>
    <property type="project" value="RGD"/>
</dbReference>
<dbReference type="GO" id="GO:0006749">
    <property type="term" value="P:glutathione metabolic process"/>
    <property type="evidence" value="ECO:0000315"/>
    <property type="project" value="RGD"/>
</dbReference>
<dbReference type="GO" id="GO:0070814">
    <property type="term" value="P:hydrogen sulfide biosynthetic process"/>
    <property type="evidence" value="ECO:0000250"/>
    <property type="project" value="UniProtKB"/>
</dbReference>
<dbReference type="GO" id="GO:0006629">
    <property type="term" value="P:lipid metabolic process"/>
    <property type="evidence" value="ECO:0007669"/>
    <property type="project" value="UniProtKB-KW"/>
</dbReference>
<dbReference type="GO" id="GO:0043066">
    <property type="term" value="P:negative regulation of apoptotic process"/>
    <property type="evidence" value="ECO:0000250"/>
    <property type="project" value="UniProtKB"/>
</dbReference>
<dbReference type="GO" id="GO:2001234">
    <property type="term" value="P:negative regulation of apoptotic signaling pathway"/>
    <property type="evidence" value="ECO:0000266"/>
    <property type="project" value="RGD"/>
</dbReference>
<dbReference type="GO" id="GO:0030308">
    <property type="term" value="P:negative regulation of cell growth"/>
    <property type="evidence" value="ECO:0000315"/>
    <property type="project" value="RGD"/>
</dbReference>
<dbReference type="GO" id="GO:0008285">
    <property type="term" value="P:negative regulation of cell population proliferation"/>
    <property type="evidence" value="ECO:0000315"/>
    <property type="project" value="RGD"/>
</dbReference>
<dbReference type="GO" id="GO:1904831">
    <property type="term" value="P:positive regulation of aortic smooth muscle cell differentiation"/>
    <property type="evidence" value="ECO:0000266"/>
    <property type="project" value="RGD"/>
</dbReference>
<dbReference type="GO" id="GO:0043123">
    <property type="term" value="P:positive regulation of canonical NF-kappaB signal transduction"/>
    <property type="evidence" value="ECO:0000250"/>
    <property type="project" value="UniProtKB"/>
</dbReference>
<dbReference type="GO" id="GO:0051092">
    <property type="term" value="P:positive regulation of NF-kappaB transcription factor activity"/>
    <property type="evidence" value="ECO:0000250"/>
    <property type="project" value="UniProtKB"/>
</dbReference>
<dbReference type="GO" id="GO:0051289">
    <property type="term" value="P:protein homotetramerization"/>
    <property type="evidence" value="ECO:0000266"/>
    <property type="project" value="RGD"/>
</dbReference>
<dbReference type="GO" id="GO:0044524">
    <property type="term" value="P:protein sulfhydration"/>
    <property type="evidence" value="ECO:0000250"/>
    <property type="project" value="UniProtKB"/>
</dbReference>
<dbReference type="GO" id="GO:0018272">
    <property type="term" value="P:protein-pyridoxal-5-phosphate linkage via peptidyl-N6-pyridoxal phosphate-L-lysine"/>
    <property type="evidence" value="ECO:0000250"/>
    <property type="project" value="UniProtKB"/>
</dbReference>
<dbReference type="GO" id="GO:0019346">
    <property type="term" value="P:transsulfuration"/>
    <property type="evidence" value="ECO:0000266"/>
    <property type="project" value="RGD"/>
</dbReference>
<dbReference type="CDD" id="cd00614">
    <property type="entry name" value="CGS_like"/>
    <property type="match status" value="1"/>
</dbReference>
<dbReference type="FunFam" id="3.90.1150.10:FF:000008">
    <property type="entry name" value="Cystathionine gamma-synthase"/>
    <property type="match status" value="1"/>
</dbReference>
<dbReference type="FunFam" id="3.40.640.10:FF:000009">
    <property type="entry name" value="Cystathionine gamma-synthase homolog"/>
    <property type="match status" value="1"/>
</dbReference>
<dbReference type="Gene3D" id="3.90.1150.10">
    <property type="entry name" value="Aspartate Aminotransferase, domain 1"/>
    <property type="match status" value="1"/>
</dbReference>
<dbReference type="Gene3D" id="3.40.640.10">
    <property type="entry name" value="Type I PLP-dependent aspartate aminotransferase-like (Major domain)"/>
    <property type="match status" value="1"/>
</dbReference>
<dbReference type="InterPro" id="IPR000277">
    <property type="entry name" value="Cys/Met-Metab_PyrdxlP-dep_enz"/>
</dbReference>
<dbReference type="InterPro" id="IPR054542">
    <property type="entry name" value="Cys_met_metab_PP"/>
</dbReference>
<dbReference type="InterPro" id="IPR015424">
    <property type="entry name" value="PyrdxlP-dep_Trfase"/>
</dbReference>
<dbReference type="InterPro" id="IPR015421">
    <property type="entry name" value="PyrdxlP-dep_Trfase_major"/>
</dbReference>
<dbReference type="InterPro" id="IPR015422">
    <property type="entry name" value="PyrdxlP-dep_Trfase_small"/>
</dbReference>
<dbReference type="PANTHER" id="PTHR11808:SF15">
    <property type="entry name" value="CYSTATHIONINE GAMMA-LYASE"/>
    <property type="match status" value="1"/>
</dbReference>
<dbReference type="PANTHER" id="PTHR11808">
    <property type="entry name" value="TRANS-SULFURATION ENZYME FAMILY MEMBER"/>
    <property type="match status" value="1"/>
</dbReference>
<dbReference type="Pfam" id="PF01053">
    <property type="entry name" value="Cys_Met_Meta_PP"/>
    <property type="match status" value="1"/>
</dbReference>
<dbReference type="PIRSF" id="PIRSF001434">
    <property type="entry name" value="CGS"/>
    <property type="match status" value="1"/>
</dbReference>
<dbReference type="SUPFAM" id="SSF53383">
    <property type="entry name" value="PLP-dependent transferases"/>
    <property type="match status" value="1"/>
</dbReference>
<dbReference type="PROSITE" id="PS00868">
    <property type="entry name" value="CYS_MET_METAB_PP"/>
    <property type="match status" value="1"/>
</dbReference>
<evidence type="ECO:0000250" key="1"/>
<evidence type="ECO:0000250" key="2">
    <source>
        <dbReference type="UniProtKB" id="P32929"/>
    </source>
</evidence>
<evidence type="ECO:0000250" key="3">
    <source>
        <dbReference type="UniProtKB" id="Q8VCN5"/>
    </source>
</evidence>
<evidence type="ECO:0000269" key="4">
    <source>
    </source>
</evidence>
<evidence type="ECO:0000305" key="5"/>
<evidence type="ECO:0000305" key="6">
    <source>
    </source>
</evidence>
<evidence type="ECO:0000305" key="7">
    <source>
    </source>
</evidence>
<evidence type="ECO:0007744" key="8">
    <source>
    </source>
</evidence>